<protein>
    <recommendedName>
        <fullName evidence="2">Small ribosomal subunit protein uS8</fullName>
    </recommendedName>
    <alternativeName>
        <fullName evidence="3">30S ribosomal protein S8</fullName>
    </alternativeName>
</protein>
<proteinExistence type="inferred from homology"/>
<feature type="initiator methionine" description="Removed" evidence="1">
    <location>
        <position position="1"/>
    </location>
</feature>
<feature type="chain" id="PRO_0000126524" description="Small ribosomal subunit protein uS8">
    <location>
        <begin position="2"/>
        <end position="130"/>
    </location>
</feature>
<dbReference type="EMBL" id="BA000021">
    <property type="protein sequence ID" value="BAC24703.1"/>
    <property type="molecule type" value="Genomic_DNA"/>
</dbReference>
<dbReference type="SMR" id="Q8D1Z8"/>
<dbReference type="STRING" id="36870.gene:10369066"/>
<dbReference type="KEGG" id="wbr:rpsH"/>
<dbReference type="eggNOG" id="COG0096">
    <property type="taxonomic scope" value="Bacteria"/>
</dbReference>
<dbReference type="HOGENOM" id="CLU_098428_0_0_6"/>
<dbReference type="OrthoDB" id="9802617at2"/>
<dbReference type="Proteomes" id="UP000000562">
    <property type="component" value="Chromosome"/>
</dbReference>
<dbReference type="GO" id="GO:1990904">
    <property type="term" value="C:ribonucleoprotein complex"/>
    <property type="evidence" value="ECO:0007669"/>
    <property type="project" value="UniProtKB-KW"/>
</dbReference>
<dbReference type="GO" id="GO:0005840">
    <property type="term" value="C:ribosome"/>
    <property type="evidence" value="ECO:0007669"/>
    <property type="project" value="UniProtKB-KW"/>
</dbReference>
<dbReference type="GO" id="GO:0019843">
    <property type="term" value="F:rRNA binding"/>
    <property type="evidence" value="ECO:0007669"/>
    <property type="project" value="UniProtKB-UniRule"/>
</dbReference>
<dbReference type="GO" id="GO:0003735">
    <property type="term" value="F:structural constituent of ribosome"/>
    <property type="evidence" value="ECO:0007669"/>
    <property type="project" value="InterPro"/>
</dbReference>
<dbReference type="GO" id="GO:0006412">
    <property type="term" value="P:translation"/>
    <property type="evidence" value="ECO:0007669"/>
    <property type="project" value="UniProtKB-UniRule"/>
</dbReference>
<dbReference type="FunFam" id="3.30.1370.30:FF:000002">
    <property type="entry name" value="30S ribosomal protein S8"/>
    <property type="match status" value="1"/>
</dbReference>
<dbReference type="FunFam" id="3.30.1490.10:FF:000001">
    <property type="entry name" value="30S ribosomal protein S8"/>
    <property type="match status" value="1"/>
</dbReference>
<dbReference type="Gene3D" id="3.30.1370.30">
    <property type="match status" value="1"/>
</dbReference>
<dbReference type="Gene3D" id="3.30.1490.10">
    <property type="match status" value="1"/>
</dbReference>
<dbReference type="HAMAP" id="MF_01302_B">
    <property type="entry name" value="Ribosomal_uS8_B"/>
    <property type="match status" value="1"/>
</dbReference>
<dbReference type="InterPro" id="IPR000630">
    <property type="entry name" value="Ribosomal_uS8"/>
</dbReference>
<dbReference type="InterPro" id="IPR047863">
    <property type="entry name" value="Ribosomal_uS8_CS"/>
</dbReference>
<dbReference type="InterPro" id="IPR035987">
    <property type="entry name" value="Ribosomal_uS8_sf"/>
</dbReference>
<dbReference type="NCBIfam" id="NF001109">
    <property type="entry name" value="PRK00136.1"/>
    <property type="match status" value="1"/>
</dbReference>
<dbReference type="PANTHER" id="PTHR11758">
    <property type="entry name" value="40S RIBOSOMAL PROTEIN S15A"/>
    <property type="match status" value="1"/>
</dbReference>
<dbReference type="Pfam" id="PF00410">
    <property type="entry name" value="Ribosomal_S8"/>
    <property type="match status" value="1"/>
</dbReference>
<dbReference type="SUPFAM" id="SSF56047">
    <property type="entry name" value="Ribosomal protein S8"/>
    <property type="match status" value="1"/>
</dbReference>
<dbReference type="PROSITE" id="PS00053">
    <property type="entry name" value="RIBOSOMAL_S8"/>
    <property type="match status" value="1"/>
</dbReference>
<name>RS8_WIGBR</name>
<accession>Q8D1Z8</accession>
<sequence>MSMQDPISDMITRIRNGQSAKKELISMPYSNLKKSIANLLKEEGFILDYKVEDNKKPTLKLNLKYFKNNPVIEKIKRISRPGLRIYKKRKHLPNVMSGMGIAIVSTSRGIMTDKLARTYNLGGEIICYVE</sequence>
<gene>
    <name evidence="2" type="primary">rpsH</name>
    <name type="ordered locus">WIGBR5570</name>
</gene>
<comment type="function">
    <text evidence="2">One of the primary rRNA binding proteins, it binds directly to 16S rRNA central domain where it helps coordinate assembly of the platform of the 30S subunit.</text>
</comment>
<comment type="subunit">
    <text evidence="2">Part of the 30S ribosomal subunit. Contacts proteins S5 and S12.</text>
</comment>
<comment type="similarity">
    <text evidence="2">Belongs to the universal ribosomal protein uS8 family.</text>
</comment>
<keyword id="KW-1185">Reference proteome</keyword>
<keyword id="KW-0687">Ribonucleoprotein</keyword>
<keyword id="KW-0689">Ribosomal protein</keyword>
<keyword id="KW-0694">RNA-binding</keyword>
<keyword id="KW-0699">rRNA-binding</keyword>
<evidence type="ECO:0000250" key="1"/>
<evidence type="ECO:0000255" key="2">
    <source>
        <dbReference type="HAMAP-Rule" id="MF_01302"/>
    </source>
</evidence>
<evidence type="ECO:0000305" key="3"/>
<reference key="1">
    <citation type="journal article" date="2002" name="Nat. Genet.">
        <title>Genome sequence of the endocellular obligate symbiont of tsetse flies, Wigglesworthia glossinidia.</title>
        <authorList>
            <person name="Akman L."/>
            <person name="Yamashita A."/>
            <person name="Watanabe H."/>
            <person name="Oshima K."/>
            <person name="Shiba T."/>
            <person name="Hattori M."/>
            <person name="Aksoy S."/>
        </authorList>
    </citation>
    <scope>NUCLEOTIDE SEQUENCE [LARGE SCALE GENOMIC DNA]</scope>
</reference>
<organism>
    <name type="scientific">Wigglesworthia glossinidia brevipalpis</name>
    <dbReference type="NCBI Taxonomy" id="36870"/>
    <lineage>
        <taxon>Bacteria</taxon>
        <taxon>Pseudomonadati</taxon>
        <taxon>Pseudomonadota</taxon>
        <taxon>Gammaproteobacteria</taxon>
        <taxon>Enterobacterales</taxon>
        <taxon>Erwiniaceae</taxon>
        <taxon>Wigglesworthia</taxon>
    </lineage>
</organism>